<evidence type="ECO:0000269" key="1">
    <source>
    </source>
</evidence>
<evidence type="ECO:0000305" key="2"/>
<dbReference type="PIR" id="A01823">
    <property type="entry name" value="QHEC2"/>
</dbReference>
<dbReference type="GO" id="GO:0005615">
    <property type="term" value="C:extracellular space"/>
    <property type="evidence" value="ECO:0007669"/>
    <property type="project" value="InterPro"/>
</dbReference>
<dbReference type="GO" id="GO:0090729">
    <property type="term" value="F:toxin activity"/>
    <property type="evidence" value="ECO:0007669"/>
    <property type="project" value="UniProtKB-KW"/>
</dbReference>
<dbReference type="InterPro" id="IPR019806">
    <property type="entry name" value="Heat-stable_enterotox_CS"/>
</dbReference>
<dbReference type="InterPro" id="IPR001489">
    <property type="entry name" value="Heat-stable_enterotox_STa"/>
</dbReference>
<dbReference type="Pfam" id="PF02048">
    <property type="entry name" value="Enterotoxin_ST"/>
    <property type="match status" value="1"/>
</dbReference>
<dbReference type="PROSITE" id="PS00273">
    <property type="entry name" value="ENTEROTOXIN_H_STABLE"/>
    <property type="match status" value="1"/>
</dbReference>
<protein>
    <recommendedName>
        <fullName>Heat-stable enterotoxin ST-2</fullName>
        <shortName>ST-B</shortName>
    </recommendedName>
</protein>
<comment type="function">
    <text>Toxin which activates the particulate form of guanylate cyclase and increases cyclic GMP levels within the host intestinal epithelial cells.</text>
</comment>
<comment type="subcellular location">
    <subcellularLocation>
        <location>Secreted</location>
    </subcellularLocation>
</comment>
<comment type="similarity">
    <text evidence="2">Belongs to the heat-stable enterotoxin family.</text>
</comment>
<organism>
    <name type="scientific">Escherichia coli</name>
    <dbReference type="NCBI Taxonomy" id="562"/>
    <lineage>
        <taxon>Bacteria</taxon>
        <taxon>Pseudomonadati</taxon>
        <taxon>Pseudomonadota</taxon>
        <taxon>Gammaproteobacteria</taxon>
        <taxon>Enterobacterales</taxon>
        <taxon>Enterobacteriaceae</taxon>
        <taxon>Escherichia</taxon>
    </lineage>
</organism>
<reference key="1">
    <citation type="journal article" date="1981" name="J. Biol. Chem.">
        <title>Amino acid sequence of heat-stable enterotoxin produced by Escherichia coli pathogenic for man.</title>
        <authorList>
            <person name="Chan S.-K."/>
            <person name="Giannella R.A."/>
        </authorList>
    </citation>
    <scope>PROTEIN SEQUENCE</scope>
    <source>
        <strain>O42:K86:H37 / 18D / ETEC</strain>
    </source>
</reference>
<reference key="2">
    <citation type="journal article" date="1985" name="Infect. Immun.">
        <title>Revised amino acid sequence for a heat-stable enterotoxin produced by an Escherichia coli strain (18D) that is pathogenic for humans.</title>
        <authorList>
            <person name="Thompson M.R."/>
            <person name="Giannella R.A."/>
        </authorList>
    </citation>
    <scope>SEQUENCE REVISION TO 11 AND 18</scope>
</reference>
<reference key="3">
    <citation type="journal article" date="1987" name="FEBS Lett.">
        <title>Mode of disulfide bond formation of a heat-stable enterotoxin (STh) produced by a human strain of enterotoxigenic Escherichia coli.</title>
        <authorList>
            <person name="Shimonishi Y."/>
            <person name="Hidaka Y."/>
            <person name="Koizumi M."/>
            <person name="Hane M."/>
            <person name="Aimoto S."/>
            <person name="Takeda T."/>
            <person name="Miwatani T."/>
            <person name="Takeda Y."/>
        </authorList>
    </citation>
    <scope>DISULFIDE BONDS</scope>
</reference>
<accession>P01560</accession>
<proteinExistence type="evidence at protein level"/>
<name>HSTB_ECOLX</name>
<sequence>NTFYCCELCCNPACAGCY</sequence>
<keyword id="KW-0903">Direct protein sequencing</keyword>
<keyword id="KW-1015">Disulfide bond</keyword>
<keyword id="KW-0260">Enterotoxin</keyword>
<keyword id="KW-0964">Secreted</keyword>
<keyword id="KW-0800">Toxin</keyword>
<keyword id="KW-0843">Virulence</keyword>
<feature type="peptide" id="PRO_0000044885" description="Heat-stable enterotoxin ST-2">
    <location>
        <begin position="1"/>
        <end position="18"/>
    </location>
</feature>
<feature type="disulfide bond" evidence="1">
    <location>
        <begin position="5"/>
        <end position="10"/>
    </location>
</feature>
<feature type="disulfide bond" evidence="1">
    <location>
        <begin position="6"/>
        <end position="14"/>
    </location>
</feature>
<feature type="disulfide bond" evidence="1">
    <location>
        <begin position="9"/>
        <end position="17"/>
    </location>
</feature>